<protein>
    <recommendedName>
        <fullName>DNA polymerase</fullName>
        <ecNumber>2.7.7.7</ecNumber>
    </recommendedName>
    <alternativeName>
        <fullName>DNA polymerase B</fullName>
    </alternativeName>
    <alternativeName>
        <fullName>Pfu polymerase</fullName>
    </alternativeName>
    <alternativeName>
        <fullName>Pol I</fullName>
    </alternativeName>
</protein>
<organism>
    <name type="scientific">Pyrococcus furiosus (strain ATCC 43587 / DSM 3638 / JCM 8422 / Vc1)</name>
    <dbReference type="NCBI Taxonomy" id="186497"/>
    <lineage>
        <taxon>Archaea</taxon>
        <taxon>Methanobacteriati</taxon>
        <taxon>Methanobacteriota</taxon>
        <taxon>Thermococci</taxon>
        <taxon>Thermococcales</taxon>
        <taxon>Thermococcaceae</taxon>
        <taxon>Pyrococcus</taxon>
    </lineage>
</organism>
<reference key="1">
    <citation type="journal article" date="1993" name="Nucleic Acids Res.">
        <title>Organization and nucleotide sequence of the DNA polymerase gene from the archaeon Pyrococcus furiosus.</title>
        <authorList>
            <person name="Uemori T."/>
            <person name="Ishino Y."/>
            <person name="Toh H."/>
            <person name="Asada F."/>
            <person name="Kato I."/>
        </authorList>
    </citation>
    <scope>NUCLEOTIDE SEQUENCE [GENOMIC DNA]</scope>
    <scope>PROTEIN SEQUENCE OF 1-12</scope>
    <source>
        <strain>ATCC 43587 / DSM 3638 / JCM 8422 / Vc1</strain>
    </source>
</reference>
<reference key="2">
    <citation type="journal article" date="1999" name="Genetics">
        <title>Divergence of the hyperthermophilic archaea Pyrococcus furiosus and P. horikoshii inferred from complete genomic sequences.</title>
        <authorList>
            <person name="Maeder D.L."/>
            <person name="Weiss R.B."/>
            <person name="Dunn D.M."/>
            <person name="Cherry J.L."/>
            <person name="Gonzalez J.M."/>
            <person name="DiRuggiero J."/>
            <person name="Robb F.T."/>
        </authorList>
    </citation>
    <scope>NUCLEOTIDE SEQUENCE [LARGE SCALE GENOMIC DNA]</scope>
    <source>
        <strain>ATCC 43587 / DSM 3638 / JCM 8422 / Vc1</strain>
    </source>
</reference>
<reference key="3">
    <citation type="journal article" date="1991" name="Nucleic Acids Res.">
        <title>The DNA polymerase gene from the hyperthermophilic marine archaebacterium, Pyrococcus furiosus, shows sequence homology with alpha-like DNA polymerases.</title>
        <authorList>
            <person name="Mathur E.J."/>
            <person name="Adams M.W.W."/>
            <person name="Callen W.N."/>
            <person name="Cline J.M."/>
        </authorList>
    </citation>
    <scope>NUCLEOTIDE SEQUENCE [GENOMIC DNA] OF 396-418</scope>
</reference>
<reference key="4">
    <citation type="submission" date="1991-11" db="EMBL/GenBank/DDBJ databases">
        <authorList>
            <person name="Mathur E.J."/>
            <person name="Adams M.W.W."/>
            <person name="Callen W.N."/>
            <person name="Cline J.M."/>
        </authorList>
    </citation>
    <scope>NUCLEOTIDE SEQUENCE [GENOMIC DNA] OF 396-502</scope>
</reference>
<reference key="5">
    <citation type="journal article" date="1992" name="Nucleic Acids Res.">
        <title>The DNA polymerase from the archaebacterium Pyrococcus furiosus does not testify for a specific relationship between archaebacteria and eukaryotes.</title>
        <authorList>
            <person name="Forterre P."/>
        </authorList>
    </citation>
    <scope>SIMILARITY TO OTHER POLYMERASES</scope>
</reference>
<reference key="6">
    <citation type="journal article" date="2002" name="Genes Cells">
        <title>Physical interaction between proliferating cell nuclear antigen and replication factor C from Pyrococcus furiosus.</title>
        <authorList>
            <person name="Matsumiya S."/>
            <person name="Ishino S."/>
            <person name="Ishino Y."/>
            <person name="Morikawa K."/>
        </authorList>
    </citation>
    <scope>FUNCTION</scope>
    <scope>ACTIVITY REGULATION</scope>
</reference>
<reference key="7">
    <citation type="journal article" date="2008" name="Int. J. Biol. Macromol.">
        <title>Crystal structure of Pfu, the high fidelity DNA polymerase from Pyrococcus furiosus.</title>
        <authorList>
            <person name="Kim S.W."/>
            <person name="Kim D.U."/>
            <person name="Kim J.K."/>
            <person name="Kang L.W."/>
            <person name="Cho H.S."/>
        </authorList>
    </citation>
    <scope>X-RAY CRYSTALLOGRAPHY (2.6 ANGSTROMS)</scope>
    <scope>SUBUNIT</scope>
</reference>
<reference key="8">
    <citation type="submission" date="2009-11" db="PDB data bank">
        <title>Structural determinant for switching between the polymerase and exonuclease modes in the PCNA-replicative DNA polymerase complex.</title>
        <authorList>
            <person name="Nishida H."/>
            <person name="Mayanagi K."/>
            <person name="Kiyonari S."/>
            <person name="Sato Y."/>
            <person name="Ishino Y."/>
            <person name="Morikawa K."/>
        </authorList>
    </citation>
    <scope>X-RAY CRYSTALLOGRAPHY (2.67 ANGSTROMS)</scope>
</reference>
<reference key="9">
    <citation type="journal article" date="2013" name="PLoS ONE">
        <title>Structures of an apo and a binary complex of an evolved archeal B family DNA polymerase capable of synthesising highly cy-dye labelled DNA.</title>
        <authorList>
            <person name="Wynne S.A."/>
            <person name="Pinheiro V.B."/>
            <person name="Holliger P."/>
            <person name="Leslie A.G."/>
        </authorList>
    </citation>
    <scope>X-RAY CRYSTALLOGRAPHY (2.4 ANGSTROMS) WITH AND WITHOUT DNA</scope>
    <scope>BIOTECHNOLOGY</scope>
    <scope>DNA-BINDING</scope>
</reference>
<comment type="function">
    <text evidence="1">In addition to polymerase activity, this DNA polymerase exhibits 3' to 5' exonuclease activity.</text>
</comment>
<comment type="catalytic activity">
    <reaction>
        <text>DNA(n) + a 2'-deoxyribonucleoside 5'-triphosphate = DNA(n+1) + diphosphate</text>
        <dbReference type="Rhea" id="RHEA:22508"/>
        <dbReference type="Rhea" id="RHEA-COMP:17339"/>
        <dbReference type="Rhea" id="RHEA-COMP:17340"/>
        <dbReference type="ChEBI" id="CHEBI:33019"/>
        <dbReference type="ChEBI" id="CHEBI:61560"/>
        <dbReference type="ChEBI" id="CHEBI:173112"/>
        <dbReference type="EC" id="2.7.7.7"/>
    </reaction>
</comment>
<comment type="activity regulation">
    <text evidence="1">An 11-mer corresponding to the PIP-box of RfcL inhibits DNA synthesis.</text>
</comment>
<comment type="subunit">
    <text evidence="2">Monomer.</text>
</comment>
<comment type="biotechnology">
    <text evidence="3">Because Pfu DNA polymerase exhibits the lowest error rate of any thermostable DNA polymerase studied, it is routinely used for PCR. It is sold by a number of companies including Promega, Stratagene and ThermoScientific. Various mutations to improve its abilities have been incorporated.</text>
</comment>
<comment type="similarity">
    <text evidence="4">Belongs to the DNA polymerase type-B family.</text>
</comment>
<feature type="chain" id="PRO_0000046480" description="DNA polymerase">
    <location>
        <begin position="1"/>
        <end position="775"/>
    </location>
</feature>
<feature type="strand" evidence="7">
    <location>
        <begin position="2"/>
        <end position="10"/>
    </location>
</feature>
<feature type="strand" evidence="7">
    <location>
        <begin position="13"/>
        <end position="22"/>
    </location>
</feature>
<feature type="strand" evidence="7">
    <location>
        <begin position="25"/>
        <end position="31"/>
    </location>
</feature>
<feature type="strand" evidence="7">
    <location>
        <begin position="37"/>
        <end position="43"/>
    </location>
</feature>
<feature type="helix" evidence="7">
    <location>
        <begin position="45"/>
        <end position="47"/>
    </location>
</feature>
<feature type="helix" evidence="7">
    <location>
        <begin position="48"/>
        <end position="52"/>
    </location>
</feature>
<feature type="strand" evidence="7">
    <location>
        <begin position="55"/>
        <end position="58"/>
    </location>
</feature>
<feature type="strand" evidence="7">
    <location>
        <begin position="61"/>
        <end position="64"/>
    </location>
</feature>
<feature type="strand" evidence="7">
    <location>
        <begin position="70"/>
        <end position="75"/>
    </location>
</feature>
<feature type="strand" evidence="7">
    <location>
        <begin position="78"/>
        <end position="86"/>
    </location>
</feature>
<feature type="helix" evidence="7">
    <location>
        <begin position="90"/>
        <end position="92"/>
    </location>
</feature>
<feature type="helix" evidence="7">
    <location>
        <begin position="93"/>
        <end position="100"/>
    </location>
</feature>
<feature type="strand" evidence="7">
    <location>
        <begin position="106"/>
        <end position="111"/>
    </location>
</feature>
<feature type="helix" evidence="7">
    <location>
        <begin position="116"/>
        <end position="124"/>
    </location>
</feature>
<feature type="strand" evidence="7">
    <location>
        <begin position="137"/>
        <end position="144"/>
    </location>
</feature>
<feature type="strand" evidence="6">
    <location>
        <begin position="148"/>
        <end position="150"/>
    </location>
</feature>
<feature type="strand" evidence="5">
    <location>
        <begin position="152"/>
        <end position="155"/>
    </location>
</feature>
<feature type="strand" evidence="7">
    <location>
        <begin position="157"/>
        <end position="163"/>
    </location>
</feature>
<feature type="strand" evidence="7">
    <location>
        <begin position="168"/>
        <end position="174"/>
    </location>
</feature>
<feature type="strand" evidence="7">
    <location>
        <begin position="179"/>
        <end position="183"/>
    </location>
</feature>
<feature type="helix" evidence="7">
    <location>
        <begin position="187"/>
        <end position="201"/>
    </location>
</feature>
<feature type="strand" evidence="7">
    <location>
        <begin position="204"/>
        <end position="210"/>
    </location>
</feature>
<feature type="turn" evidence="7">
    <location>
        <begin position="211"/>
        <end position="214"/>
    </location>
</feature>
<feature type="helix" evidence="7">
    <location>
        <begin position="215"/>
        <end position="225"/>
    </location>
</feature>
<feature type="strand" evidence="7">
    <location>
        <begin position="240"/>
        <end position="246"/>
    </location>
</feature>
<feature type="strand" evidence="7">
    <location>
        <begin position="248"/>
        <end position="251"/>
    </location>
</feature>
<feature type="strand" evidence="7">
    <location>
        <begin position="255"/>
        <end position="259"/>
    </location>
</feature>
<feature type="helix" evidence="7">
    <location>
        <begin position="260"/>
        <end position="267"/>
    </location>
</feature>
<feature type="helix" evidence="7">
    <location>
        <begin position="275"/>
        <end position="283"/>
    </location>
</feature>
<feature type="helix" evidence="7">
    <location>
        <begin position="292"/>
        <end position="301"/>
    </location>
</feature>
<feature type="strand" evidence="7">
    <location>
        <begin position="302"/>
        <end position="304"/>
    </location>
</feature>
<feature type="helix" evidence="7">
    <location>
        <begin position="306"/>
        <end position="337"/>
    </location>
</feature>
<feature type="helix" evidence="7">
    <location>
        <begin position="341"/>
        <end position="344"/>
    </location>
</feature>
<feature type="helix" evidence="7">
    <location>
        <begin position="349"/>
        <end position="363"/>
    </location>
</feature>
<feature type="helix" evidence="7">
    <location>
        <begin position="374"/>
        <end position="382"/>
    </location>
</feature>
<feature type="strand" evidence="7">
    <location>
        <begin position="396"/>
        <end position="408"/>
    </location>
</feature>
<feature type="helix" evidence="7">
    <location>
        <begin position="409"/>
        <end position="416"/>
    </location>
</feature>
<feature type="helix" evidence="7">
    <location>
        <begin position="421"/>
        <end position="423"/>
    </location>
</feature>
<feature type="strand" evidence="7">
    <location>
        <begin position="430"/>
        <end position="434"/>
    </location>
</feature>
<feature type="turn" evidence="7">
    <location>
        <begin position="436"/>
        <end position="438"/>
    </location>
</feature>
<feature type="strand" evidence="7">
    <location>
        <begin position="441"/>
        <end position="443"/>
    </location>
</feature>
<feature type="helix" evidence="7">
    <location>
        <begin position="449"/>
        <end position="470"/>
    </location>
</feature>
<feature type="helix" evidence="7">
    <location>
        <begin position="474"/>
        <end position="498"/>
    </location>
</feature>
<feature type="helix" evidence="7">
    <location>
        <begin position="508"/>
        <end position="531"/>
    </location>
</feature>
<feature type="strand" evidence="7">
    <location>
        <begin position="536"/>
        <end position="541"/>
    </location>
</feature>
<feature type="strand" evidence="7">
    <location>
        <begin position="544"/>
        <end position="548"/>
    </location>
</feature>
<feature type="helix" evidence="7">
    <location>
        <begin position="554"/>
        <end position="571"/>
    </location>
</feature>
<feature type="strand" evidence="7">
    <location>
        <begin position="578"/>
        <end position="591"/>
    </location>
</feature>
<feature type="strand" evidence="7">
    <location>
        <begin position="594"/>
        <end position="598"/>
    </location>
</feature>
<feature type="strand" evidence="7">
    <location>
        <begin position="604"/>
        <end position="608"/>
    </location>
</feature>
<feature type="helix" evidence="8">
    <location>
        <begin position="610"/>
        <end position="612"/>
    </location>
</feature>
<feature type="strand" evidence="8">
    <location>
        <begin position="614"/>
        <end position="616"/>
    </location>
</feature>
<feature type="helix" evidence="7">
    <location>
        <begin position="620"/>
        <end position="632"/>
    </location>
</feature>
<feature type="helix" evidence="7">
    <location>
        <begin position="637"/>
        <end position="653"/>
    </location>
</feature>
<feature type="helix" evidence="6">
    <location>
        <begin position="658"/>
        <end position="661"/>
    </location>
</feature>
<feature type="strand" evidence="6">
    <location>
        <begin position="663"/>
        <end position="666"/>
    </location>
</feature>
<feature type="turn" evidence="6">
    <location>
        <begin position="671"/>
        <end position="673"/>
    </location>
</feature>
<feature type="turn" evidence="7">
    <location>
        <begin position="683"/>
        <end position="687"/>
    </location>
</feature>
<feature type="turn" evidence="8">
    <location>
        <begin position="689"/>
        <end position="691"/>
    </location>
</feature>
<feature type="strand" evidence="5">
    <location>
        <begin position="696"/>
        <end position="698"/>
    </location>
</feature>
<feature type="strand" evidence="7">
    <location>
        <begin position="702"/>
        <end position="705"/>
    </location>
</feature>
<feature type="strand" evidence="8">
    <location>
        <begin position="706"/>
        <end position="709"/>
    </location>
</feature>
<feature type="turn" evidence="7">
    <location>
        <begin position="711"/>
        <end position="714"/>
    </location>
</feature>
<feature type="strand" evidence="7">
    <location>
        <begin position="715"/>
        <end position="718"/>
    </location>
</feature>
<feature type="turn" evidence="6">
    <location>
        <begin position="723"/>
        <end position="725"/>
    </location>
</feature>
<feature type="helix" evidence="7">
    <location>
        <begin position="731"/>
        <end position="735"/>
    </location>
</feature>
<feature type="helix" evidence="7">
    <location>
        <begin position="738"/>
        <end position="746"/>
    </location>
</feature>
<feature type="helix" evidence="7">
    <location>
        <begin position="747"/>
        <end position="749"/>
    </location>
</feature>
<feature type="helix" evidence="7">
    <location>
        <begin position="753"/>
        <end position="756"/>
    </location>
</feature>
<feature type="helix" evidence="6">
    <location>
        <begin position="767"/>
        <end position="769"/>
    </location>
</feature>
<gene>
    <name type="primary">pol</name>
    <name type="ordered locus">PF0212</name>
</gene>
<dbReference type="EC" id="2.7.7.7"/>
<dbReference type="EMBL" id="D12983">
    <property type="protein sequence ID" value="BAA02362.1"/>
    <property type="molecule type" value="Genomic_DNA"/>
</dbReference>
<dbReference type="EMBL" id="AE009950">
    <property type="protein sequence ID" value="AAL80336.1"/>
    <property type="molecule type" value="Genomic_DNA"/>
</dbReference>
<dbReference type="PIR" id="S35543">
    <property type="entry name" value="S35543"/>
</dbReference>
<dbReference type="RefSeq" id="WP_011011325.1">
    <property type="nucleotide sequence ID" value="NZ_CP023154.1"/>
</dbReference>
<dbReference type="PDB" id="2JGU">
    <property type="method" value="X-ray"/>
    <property type="resolution" value="2.60 A"/>
    <property type="chains" value="A=1-775"/>
</dbReference>
<dbReference type="PDB" id="3A2F">
    <property type="method" value="X-ray"/>
    <property type="resolution" value="2.67 A"/>
    <property type="chains" value="A=1-775"/>
</dbReference>
<dbReference type="PDB" id="4AHC">
    <property type="method" value="X-ray"/>
    <property type="resolution" value="2.40 A"/>
    <property type="chains" value="A/B=1-775"/>
</dbReference>
<dbReference type="PDB" id="4AIL">
    <property type="method" value="X-ray"/>
    <property type="resolution" value="2.90 A"/>
    <property type="chains" value="C=1-775"/>
</dbReference>
<dbReference type="PDBsum" id="2JGU"/>
<dbReference type="PDBsum" id="3A2F"/>
<dbReference type="PDBsum" id="4AHC"/>
<dbReference type="PDBsum" id="4AIL"/>
<dbReference type="SMR" id="P61875"/>
<dbReference type="STRING" id="186497.PF0212"/>
<dbReference type="PaxDb" id="186497-PF0212"/>
<dbReference type="KEGG" id="pfu:PF0212"/>
<dbReference type="PATRIC" id="fig|186497.12.peg.220"/>
<dbReference type="eggNOG" id="arCOG00328">
    <property type="taxonomic scope" value="Archaea"/>
</dbReference>
<dbReference type="HOGENOM" id="CLU_000203_6_0_2"/>
<dbReference type="OrthoDB" id="323192at2157"/>
<dbReference type="PhylomeDB" id="P61875"/>
<dbReference type="BRENDA" id="2.7.7.7">
    <property type="organism ID" value="5243"/>
</dbReference>
<dbReference type="EvolutionaryTrace" id="P61875"/>
<dbReference type="Proteomes" id="UP000001013">
    <property type="component" value="Chromosome"/>
</dbReference>
<dbReference type="GO" id="GO:0003677">
    <property type="term" value="F:DNA binding"/>
    <property type="evidence" value="ECO:0007669"/>
    <property type="project" value="UniProtKB-KW"/>
</dbReference>
<dbReference type="GO" id="GO:0003887">
    <property type="term" value="F:DNA-directed DNA polymerase activity"/>
    <property type="evidence" value="ECO:0007669"/>
    <property type="project" value="UniProtKB-KW"/>
</dbReference>
<dbReference type="GO" id="GO:0004519">
    <property type="term" value="F:endonuclease activity"/>
    <property type="evidence" value="ECO:0007669"/>
    <property type="project" value="UniProtKB-KW"/>
</dbReference>
<dbReference type="GO" id="GO:0000166">
    <property type="term" value="F:nucleotide binding"/>
    <property type="evidence" value="ECO:0007669"/>
    <property type="project" value="InterPro"/>
</dbReference>
<dbReference type="GO" id="GO:0006261">
    <property type="term" value="P:DNA-templated DNA replication"/>
    <property type="evidence" value="ECO:0007669"/>
    <property type="project" value="TreeGrafter"/>
</dbReference>
<dbReference type="CDD" id="cd05780">
    <property type="entry name" value="DNA_polB_Kod1_like_exo"/>
    <property type="match status" value="1"/>
</dbReference>
<dbReference type="CDD" id="cd05536">
    <property type="entry name" value="POLBc_B3"/>
    <property type="match status" value="1"/>
</dbReference>
<dbReference type="FunFam" id="3.30.342.10:FF:000015">
    <property type="entry name" value="DNA polymerase"/>
    <property type="match status" value="1"/>
</dbReference>
<dbReference type="FunFam" id="1.10.132.60:FF:000013">
    <property type="entry name" value="DNA polymerase Pol2"/>
    <property type="match status" value="1"/>
</dbReference>
<dbReference type="Gene3D" id="1.10.132.60">
    <property type="entry name" value="DNA polymerase family B, C-terminal domain"/>
    <property type="match status" value="1"/>
</dbReference>
<dbReference type="Gene3D" id="3.30.342.10">
    <property type="entry name" value="DNA Polymerase, chain B, domain 1"/>
    <property type="match status" value="1"/>
</dbReference>
<dbReference type="Gene3D" id="1.10.287.690">
    <property type="entry name" value="Helix hairpin bin"/>
    <property type="match status" value="1"/>
</dbReference>
<dbReference type="Gene3D" id="3.90.1600.10">
    <property type="entry name" value="Palm domain of DNA polymerase"/>
    <property type="match status" value="1"/>
</dbReference>
<dbReference type="Gene3D" id="3.30.420.10">
    <property type="entry name" value="Ribonuclease H-like superfamily/Ribonuclease H"/>
    <property type="match status" value="1"/>
</dbReference>
<dbReference type="IDEAL" id="IID90009"/>
<dbReference type="InterPro" id="IPR006172">
    <property type="entry name" value="DNA-dir_DNA_pol_B"/>
</dbReference>
<dbReference type="InterPro" id="IPR017964">
    <property type="entry name" value="DNA-dir_DNA_pol_B_CS"/>
</dbReference>
<dbReference type="InterPro" id="IPR006133">
    <property type="entry name" value="DNA-dir_DNA_pol_B_exonuc"/>
</dbReference>
<dbReference type="InterPro" id="IPR006134">
    <property type="entry name" value="DNA-dir_DNA_pol_B_multi_dom"/>
</dbReference>
<dbReference type="InterPro" id="IPR043502">
    <property type="entry name" value="DNA/RNA_pol_sf"/>
</dbReference>
<dbReference type="InterPro" id="IPR042087">
    <property type="entry name" value="DNA_pol_B_thumb"/>
</dbReference>
<dbReference type="InterPro" id="IPR023211">
    <property type="entry name" value="DNA_pol_palm_dom_sf"/>
</dbReference>
<dbReference type="InterPro" id="IPR050240">
    <property type="entry name" value="DNA_pol_type-B"/>
</dbReference>
<dbReference type="InterPro" id="IPR012337">
    <property type="entry name" value="RNaseH-like_sf"/>
</dbReference>
<dbReference type="InterPro" id="IPR036397">
    <property type="entry name" value="RNaseH_sf"/>
</dbReference>
<dbReference type="NCBIfam" id="TIGR00592">
    <property type="entry name" value="pol2"/>
    <property type="match status" value="2"/>
</dbReference>
<dbReference type="PANTHER" id="PTHR10322">
    <property type="entry name" value="DNA POLYMERASE CATALYTIC SUBUNIT"/>
    <property type="match status" value="1"/>
</dbReference>
<dbReference type="PANTHER" id="PTHR10322:SF23">
    <property type="entry name" value="DNA POLYMERASE DELTA CATALYTIC SUBUNIT"/>
    <property type="match status" value="1"/>
</dbReference>
<dbReference type="Pfam" id="PF00136">
    <property type="entry name" value="DNA_pol_B"/>
    <property type="match status" value="1"/>
</dbReference>
<dbReference type="Pfam" id="PF03104">
    <property type="entry name" value="DNA_pol_B_exo1"/>
    <property type="match status" value="1"/>
</dbReference>
<dbReference type="PRINTS" id="PR00106">
    <property type="entry name" value="DNAPOLB"/>
</dbReference>
<dbReference type="SMART" id="SM00486">
    <property type="entry name" value="POLBc"/>
    <property type="match status" value="1"/>
</dbReference>
<dbReference type="SUPFAM" id="SSF56672">
    <property type="entry name" value="DNA/RNA polymerases"/>
    <property type="match status" value="1"/>
</dbReference>
<dbReference type="SUPFAM" id="SSF53098">
    <property type="entry name" value="Ribonuclease H-like"/>
    <property type="match status" value="1"/>
</dbReference>
<dbReference type="PROSITE" id="PS00116">
    <property type="entry name" value="DNA_POLYMERASE_B"/>
    <property type="match status" value="1"/>
</dbReference>
<sequence length="775" mass="90113">MILDVDYITEEGKPVIRLFKKENGKFKIEHDRTFRPYIYALLRDDSKIEEVKKITGERHGKIVRIVDVEKVEKKFLGKPITVWKLYLEHPQDVPTIREKVREHPAVVDIFEYDIPFAKRYLIDKGLIPMEGEEELKILAFDIETLYHEGEEFGKGPIIMISYADENEAKVITWKNIDLPYVEVVSSEREMIKRFLRIIREKDPDIIVTYNGDSFDFPYLAKRAEKLGIKLTIGRDGSEPKMQRIGDMTAVEVKGRIHFDLYHVITRTINLPTYTLEAVYEAIFGKPKEKVYADEIAKAWESGENLERVAKYSMEDAKATYELGKEFLPMEIQLSRLVGQPLWDVSRSSTGNLVEWFLLRKAYERNEVAPNKPSEEEYQRRLRESYTGGFVKEPEKGLWENIVYLDFRALYPSIIITHNVSPDTLNLEGCKNYDIAPQVGHKFCKDIPGFIPSLLGHLLEERQKIKTKMKETQDPIEKILLDYRQKAIKLLANSFYGYYGYAKARWYCKECAESVTAWGRKYIELVWKELEEKFGFKVLYIDTDGLYATIPGGESEEIKKKALEFVKYINSKLPGLLELEYEGFYKRGFFVTKKRYAVIDEEGKVITRGLEIVRRDWSEIAKETQARVLETILKHGDVEEAVRIVKEVIQKLANYEIPPEKLAIYEQITRPLHEYKAIGPHVAVAKKLAAKGVKIKPGMVIGYIVLRGDGPISNRAILAEEYDPKKHKYDAEYYIENQVLPAVLRILEGFGYRKEDLRYQKTRQVGLTSWLNIKKS</sequence>
<name>DPOL_PYRFU</name>
<keyword id="KW-0002">3D-structure</keyword>
<keyword id="KW-0903">Direct protein sequencing</keyword>
<keyword id="KW-0235">DNA replication</keyword>
<keyword id="KW-0238">DNA-binding</keyword>
<keyword id="KW-0239">DNA-directed DNA polymerase</keyword>
<keyword id="KW-0255">Endonuclease</keyword>
<keyword id="KW-0378">Hydrolase</keyword>
<keyword id="KW-0540">Nuclease</keyword>
<keyword id="KW-0548">Nucleotidyltransferase</keyword>
<keyword id="KW-1185">Reference proteome</keyword>
<keyword id="KW-0808">Transferase</keyword>
<accession>P61875</accession>
<accession>P80061</accession>
<accession>P95584</accession>
<proteinExistence type="evidence at protein level"/>
<evidence type="ECO:0000269" key="1">
    <source>
    </source>
</evidence>
<evidence type="ECO:0000269" key="2">
    <source>
    </source>
</evidence>
<evidence type="ECO:0000269" key="3">
    <source>
    </source>
</evidence>
<evidence type="ECO:0000305" key="4"/>
<evidence type="ECO:0007829" key="5">
    <source>
        <dbReference type="PDB" id="2JGU"/>
    </source>
</evidence>
<evidence type="ECO:0007829" key="6">
    <source>
        <dbReference type="PDB" id="3A2F"/>
    </source>
</evidence>
<evidence type="ECO:0007829" key="7">
    <source>
        <dbReference type="PDB" id="4AHC"/>
    </source>
</evidence>
<evidence type="ECO:0007829" key="8">
    <source>
        <dbReference type="PDB" id="4AIL"/>
    </source>
</evidence>